<feature type="chain" id="PRO_1000142859" description="Large ribosomal subunit protein uL15">
    <location>
        <begin position="1"/>
        <end position="148"/>
    </location>
</feature>
<feature type="region of interest" description="Disordered" evidence="2">
    <location>
        <begin position="1"/>
        <end position="51"/>
    </location>
</feature>
<feature type="compositionally biased region" description="Gly residues" evidence="2">
    <location>
        <begin position="21"/>
        <end position="31"/>
    </location>
</feature>
<evidence type="ECO:0000255" key="1">
    <source>
        <dbReference type="HAMAP-Rule" id="MF_01341"/>
    </source>
</evidence>
<evidence type="ECO:0000256" key="2">
    <source>
        <dbReference type="SAM" id="MobiDB-lite"/>
    </source>
</evidence>
<evidence type="ECO:0000305" key="3"/>
<reference key="1">
    <citation type="journal article" date="2008" name="DNA Res.">
        <title>Determination of the genome sequence of Porphyromonas gingivalis strain ATCC 33277 and genomic comparison with strain W83 revealed extensive genome rearrangements in P. gingivalis.</title>
        <authorList>
            <person name="Naito M."/>
            <person name="Hirakawa H."/>
            <person name="Yamashita A."/>
            <person name="Ohara N."/>
            <person name="Shoji M."/>
            <person name="Yukitake H."/>
            <person name="Nakayama K."/>
            <person name="Toh H."/>
            <person name="Yoshimura F."/>
            <person name="Kuhara S."/>
            <person name="Hattori M."/>
            <person name="Hayashi T."/>
            <person name="Nakayama K."/>
        </authorList>
    </citation>
    <scope>NUCLEOTIDE SEQUENCE [LARGE SCALE GENOMIC DNA]</scope>
    <source>
        <strain>ATCC 33277 / DSM 20709 / CIP 103683 / JCM 12257 / NCTC 11834 / 2561</strain>
    </source>
</reference>
<gene>
    <name evidence="1" type="primary">rplO</name>
    <name type="ordered locus">PGN_1849</name>
</gene>
<accession>B2RLX3</accession>
<protein>
    <recommendedName>
        <fullName evidence="1">Large ribosomal subunit protein uL15</fullName>
    </recommendedName>
    <alternativeName>
        <fullName evidence="3">50S ribosomal protein L15</fullName>
    </alternativeName>
</protein>
<proteinExistence type="inferred from homology"/>
<sequence>MNLSSLKPAEGAVKSRKRIGRGPGSGLGGTSTRGHKGAKSRSGYSKKIGFEGGQMPIQRRLPKFGFKNINRVEYKPINLSVLQTLSEANSLSKISVEDLIAAGLVSRNSLVKILANGTVTTALTVEAHAFSKTAEEAIVRAGGSVVKL</sequence>
<keyword id="KW-0687">Ribonucleoprotein</keyword>
<keyword id="KW-0689">Ribosomal protein</keyword>
<keyword id="KW-0694">RNA-binding</keyword>
<keyword id="KW-0699">rRNA-binding</keyword>
<dbReference type="EMBL" id="AP009380">
    <property type="protein sequence ID" value="BAG34368.1"/>
    <property type="molecule type" value="Genomic_DNA"/>
</dbReference>
<dbReference type="RefSeq" id="WP_012458575.1">
    <property type="nucleotide sequence ID" value="NC_010729.1"/>
</dbReference>
<dbReference type="SMR" id="B2RLX3"/>
<dbReference type="GeneID" id="29257000"/>
<dbReference type="KEGG" id="pgn:PGN_1849"/>
<dbReference type="eggNOG" id="COG0200">
    <property type="taxonomic scope" value="Bacteria"/>
</dbReference>
<dbReference type="HOGENOM" id="CLU_055188_4_2_10"/>
<dbReference type="OrthoDB" id="9810293at2"/>
<dbReference type="BioCyc" id="PGIN431947:G1G2V-2063-MONOMER"/>
<dbReference type="Proteomes" id="UP000008842">
    <property type="component" value="Chromosome"/>
</dbReference>
<dbReference type="GO" id="GO:0022625">
    <property type="term" value="C:cytosolic large ribosomal subunit"/>
    <property type="evidence" value="ECO:0007669"/>
    <property type="project" value="TreeGrafter"/>
</dbReference>
<dbReference type="GO" id="GO:0019843">
    <property type="term" value="F:rRNA binding"/>
    <property type="evidence" value="ECO:0007669"/>
    <property type="project" value="UniProtKB-UniRule"/>
</dbReference>
<dbReference type="GO" id="GO:0003735">
    <property type="term" value="F:structural constituent of ribosome"/>
    <property type="evidence" value="ECO:0007669"/>
    <property type="project" value="InterPro"/>
</dbReference>
<dbReference type="GO" id="GO:0006412">
    <property type="term" value="P:translation"/>
    <property type="evidence" value="ECO:0007669"/>
    <property type="project" value="UniProtKB-UniRule"/>
</dbReference>
<dbReference type="Gene3D" id="3.100.10.10">
    <property type="match status" value="1"/>
</dbReference>
<dbReference type="HAMAP" id="MF_01341">
    <property type="entry name" value="Ribosomal_uL15"/>
    <property type="match status" value="1"/>
</dbReference>
<dbReference type="InterPro" id="IPR030878">
    <property type="entry name" value="Ribosomal_uL15"/>
</dbReference>
<dbReference type="InterPro" id="IPR021131">
    <property type="entry name" value="Ribosomal_uL15/eL18"/>
</dbReference>
<dbReference type="InterPro" id="IPR036227">
    <property type="entry name" value="Ribosomal_uL15/eL18_sf"/>
</dbReference>
<dbReference type="InterPro" id="IPR005749">
    <property type="entry name" value="Ribosomal_uL15_bac-type"/>
</dbReference>
<dbReference type="InterPro" id="IPR001196">
    <property type="entry name" value="Ribosomal_uL15_CS"/>
</dbReference>
<dbReference type="NCBIfam" id="TIGR01071">
    <property type="entry name" value="rplO_bact"/>
    <property type="match status" value="1"/>
</dbReference>
<dbReference type="PANTHER" id="PTHR12934">
    <property type="entry name" value="50S RIBOSOMAL PROTEIN L15"/>
    <property type="match status" value="1"/>
</dbReference>
<dbReference type="PANTHER" id="PTHR12934:SF11">
    <property type="entry name" value="LARGE RIBOSOMAL SUBUNIT PROTEIN UL15M"/>
    <property type="match status" value="1"/>
</dbReference>
<dbReference type="Pfam" id="PF00828">
    <property type="entry name" value="Ribosomal_L27A"/>
    <property type="match status" value="1"/>
</dbReference>
<dbReference type="SUPFAM" id="SSF52080">
    <property type="entry name" value="Ribosomal proteins L15p and L18e"/>
    <property type="match status" value="1"/>
</dbReference>
<dbReference type="PROSITE" id="PS00475">
    <property type="entry name" value="RIBOSOMAL_L15"/>
    <property type="match status" value="1"/>
</dbReference>
<comment type="function">
    <text evidence="1">Binds to the 23S rRNA.</text>
</comment>
<comment type="subunit">
    <text evidence="1">Part of the 50S ribosomal subunit.</text>
</comment>
<comment type="similarity">
    <text evidence="1">Belongs to the universal ribosomal protein uL15 family.</text>
</comment>
<organism>
    <name type="scientific">Porphyromonas gingivalis (strain ATCC 33277 / DSM 20709 / CIP 103683 / JCM 12257 / NCTC 11834 / 2561)</name>
    <dbReference type="NCBI Taxonomy" id="431947"/>
    <lineage>
        <taxon>Bacteria</taxon>
        <taxon>Pseudomonadati</taxon>
        <taxon>Bacteroidota</taxon>
        <taxon>Bacteroidia</taxon>
        <taxon>Bacteroidales</taxon>
        <taxon>Porphyromonadaceae</taxon>
        <taxon>Porphyromonas</taxon>
    </lineage>
</organism>
<name>RL15_PORG3</name>